<accession>Q0SYU9</accession>
<evidence type="ECO:0000255" key="1">
    <source>
        <dbReference type="HAMAP-Rule" id="MF_01522"/>
    </source>
</evidence>
<sequence length="622" mass="69266">MSTDNKQSLPAITLAAIGVVYGDIGTSPLYTLRECLSGQFGFGLERDAVFGFLSLIFWLLIFVVSIKYLTFVMRADNAGEGGILTLMSLAGRNTSARTTSMLVIMGLIGGSFFYGEVVITPAISVMSAIEGLEIVAPQLDTWIVPLSIIVLTLLFMIQKHGTAMVGKLFAPIMLTWFLILAGLGLRSIIANPEVLHALNPMWAVHFFLEYKTVSFIALGAVVLSITGGEALYADMGHFGKFPIRLAWFTVVLPSLTLNYFGQGALLLKNPEAIKNPFFLLAPDWALIPLLIIAALATVIASQAVISGVFSLTRQAVRLGYLSPMRIIHTSEMESGQIYIPFVNWMLYVAVVIVIVSFEHSSNLAAAYGIAVTGTMVLTSILSTTVARQNWHWNKYFVALILIAFLCVDIPLFTANLDKLLSGGWLPLSLGTVMFIVMTTWKSERFRLLRRMHEHGNSLEAMIASLEKSPPVRVPGTAVYMSRAINVIPFALMHNLKHNKVLHERVILLTLRTEDAPYVHNVRRVQIEQLSPTFWRVVASYGWRETPNVEEVFHRCGLEGLSCRMMETSFFMSHESLILGKRPWYLRLRGKLYLLLQRNALRAPDQFEIPPNRVIELGTQVEI</sequence>
<comment type="function">
    <text evidence="1">Responsible for the low-affinity transport of potassium into the cell. Likely operates as a K(+):H(+) symporter.</text>
</comment>
<comment type="catalytic activity">
    <reaction evidence="1">
        <text>K(+)(in) + H(+)(in) = K(+)(out) + H(+)(out)</text>
        <dbReference type="Rhea" id="RHEA:28490"/>
        <dbReference type="ChEBI" id="CHEBI:15378"/>
        <dbReference type="ChEBI" id="CHEBI:29103"/>
    </reaction>
    <physiologicalReaction direction="right-to-left" evidence="1">
        <dbReference type="Rhea" id="RHEA:28492"/>
    </physiologicalReaction>
</comment>
<comment type="subcellular location">
    <subcellularLocation>
        <location evidence="1">Cell inner membrane</location>
        <topology evidence="1">Multi-pass membrane protein</topology>
    </subcellularLocation>
</comment>
<comment type="similarity">
    <text evidence="1">Belongs to the HAK/KUP transporter (TC 2.A.72) family.</text>
</comment>
<proteinExistence type="inferred from homology"/>
<dbReference type="EMBL" id="CP000266">
    <property type="protein sequence ID" value="ABF05766.1"/>
    <property type="molecule type" value="Genomic_DNA"/>
</dbReference>
<dbReference type="RefSeq" id="WP_000102296.1">
    <property type="nucleotide sequence ID" value="NC_008258.1"/>
</dbReference>
<dbReference type="KEGG" id="sfv:SFV_3753"/>
<dbReference type="HOGENOM" id="CLU_008142_4_2_6"/>
<dbReference type="Proteomes" id="UP000000659">
    <property type="component" value="Chromosome"/>
</dbReference>
<dbReference type="GO" id="GO:0005886">
    <property type="term" value="C:plasma membrane"/>
    <property type="evidence" value="ECO:0007669"/>
    <property type="project" value="UniProtKB-SubCell"/>
</dbReference>
<dbReference type="GO" id="GO:0015079">
    <property type="term" value="F:potassium ion transmembrane transporter activity"/>
    <property type="evidence" value="ECO:0007669"/>
    <property type="project" value="UniProtKB-UniRule"/>
</dbReference>
<dbReference type="GO" id="GO:0015293">
    <property type="term" value="F:symporter activity"/>
    <property type="evidence" value="ECO:0007669"/>
    <property type="project" value="UniProtKB-UniRule"/>
</dbReference>
<dbReference type="HAMAP" id="MF_01522">
    <property type="entry name" value="Kup"/>
    <property type="match status" value="1"/>
</dbReference>
<dbReference type="InterPro" id="IPR003855">
    <property type="entry name" value="K+_transporter"/>
</dbReference>
<dbReference type="InterPro" id="IPR053952">
    <property type="entry name" value="K_trans_C"/>
</dbReference>
<dbReference type="InterPro" id="IPR053951">
    <property type="entry name" value="K_trans_N"/>
</dbReference>
<dbReference type="InterPro" id="IPR023051">
    <property type="entry name" value="Kup"/>
</dbReference>
<dbReference type="NCBIfam" id="TIGR00794">
    <property type="entry name" value="kup"/>
    <property type="match status" value="1"/>
</dbReference>
<dbReference type="NCBIfam" id="NF008015">
    <property type="entry name" value="PRK10745.1"/>
    <property type="match status" value="1"/>
</dbReference>
<dbReference type="PANTHER" id="PTHR30540:SF79">
    <property type="entry name" value="LOW AFFINITY POTASSIUM TRANSPORT SYSTEM PROTEIN KUP"/>
    <property type="match status" value="1"/>
</dbReference>
<dbReference type="PANTHER" id="PTHR30540">
    <property type="entry name" value="OSMOTIC STRESS POTASSIUM TRANSPORTER"/>
    <property type="match status" value="1"/>
</dbReference>
<dbReference type="Pfam" id="PF02705">
    <property type="entry name" value="K_trans"/>
    <property type="match status" value="1"/>
</dbReference>
<dbReference type="Pfam" id="PF22776">
    <property type="entry name" value="K_trans_C"/>
    <property type="match status" value="1"/>
</dbReference>
<organism>
    <name type="scientific">Shigella flexneri serotype 5b (strain 8401)</name>
    <dbReference type="NCBI Taxonomy" id="373384"/>
    <lineage>
        <taxon>Bacteria</taxon>
        <taxon>Pseudomonadati</taxon>
        <taxon>Pseudomonadota</taxon>
        <taxon>Gammaproteobacteria</taxon>
        <taxon>Enterobacterales</taxon>
        <taxon>Enterobacteriaceae</taxon>
        <taxon>Shigella</taxon>
    </lineage>
</organism>
<keyword id="KW-0997">Cell inner membrane</keyword>
<keyword id="KW-1003">Cell membrane</keyword>
<keyword id="KW-0406">Ion transport</keyword>
<keyword id="KW-0472">Membrane</keyword>
<keyword id="KW-0630">Potassium</keyword>
<keyword id="KW-0633">Potassium transport</keyword>
<keyword id="KW-0769">Symport</keyword>
<keyword id="KW-0812">Transmembrane</keyword>
<keyword id="KW-1133">Transmembrane helix</keyword>
<keyword id="KW-0813">Transport</keyword>
<reference key="1">
    <citation type="journal article" date="2006" name="BMC Genomics">
        <title>Complete genome sequence of Shigella flexneri 5b and comparison with Shigella flexneri 2a.</title>
        <authorList>
            <person name="Nie H."/>
            <person name="Yang F."/>
            <person name="Zhang X."/>
            <person name="Yang J."/>
            <person name="Chen L."/>
            <person name="Wang J."/>
            <person name="Xiong Z."/>
            <person name="Peng J."/>
            <person name="Sun L."/>
            <person name="Dong J."/>
            <person name="Xue Y."/>
            <person name="Xu X."/>
            <person name="Chen S."/>
            <person name="Yao Z."/>
            <person name="Shen Y."/>
            <person name="Jin Q."/>
        </authorList>
    </citation>
    <scope>NUCLEOTIDE SEQUENCE [LARGE SCALE GENOMIC DNA]</scope>
    <source>
        <strain>8401</strain>
    </source>
</reference>
<protein>
    <recommendedName>
        <fullName evidence="1">Low affinity potassium transport system protein Kup</fullName>
    </recommendedName>
    <alternativeName>
        <fullName evidence="1">Kup system potassium uptake protein</fullName>
    </alternativeName>
</protein>
<name>KUP_SHIF8</name>
<feature type="chain" id="PRO_0000279830" description="Low affinity potassium transport system protein Kup">
    <location>
        <begin position="1"/>
        <end position="622"/>
    </location>
</feature>
<feature type="transmembrane region" description="Helical" evidence="1">
    <location>
        <begin position="9"/>
        <end position="29"/>
    </location>
</feature>
<feature type="transmembrane region" description="Helical" evidence="1">
    <location>
        <begin position="49"/>
        <end position="69"/>
    </location>
</feature>
<feature type="transmembrane region" description="Helical" evidence="1">
    <location>
        <begin position="103"/>
        <end position="123"/>
    </location>
</feature>
<feature type="transmembrane region" description="Helical" evidence="1">
    <location>
        <begin position="137"/>
        <end position="157"/>
    </location>
</feature>
<feature type="transmembrane region" description="Helical" evidence="1">
    <location>
        <begin position="165"/>
        <end position="185"/>
    </location>
</feature>
<feature type="transmembrane region" description="Helical" evidence="1">
    <location>
        <begin position="213"/>
        <end position="233"/>
    </location>
</feature>
<feature type="transmembrane region" description="Helical" evidence="1">
    <location>
        <begin position="247"/>
        <end position="267"/>
    </location>
</feature>
<feature type="transmembrane region" description="Helical" evidence="1">
    <location>
        <begin position="276"/>
        <end position="296"/>
    </location>
</feature>
<feature type="transmembrane region" description="Helical" evidence="1">
    <location>
        <begin position="337"/>
        <end position="357"/>
    </location>
</feature>
<feature type="transmembrane region" description="Helical" evidence="1">
    <location>
        <begin position="363"/>
        <end position="383"/>
    </location>
</feature>
<feature type="transmembrane region" description="Helical" evidence="1">
    <location>
        <begin position="396"/>
        <end position="416"/>
    </location>
</feature>
<feature type="transmembrane region" description="Helical" evidence="1">
    <location>
        <begin position="419"/>
        <end position="439"/>
    </location>
</feature>
<gene>
    <name evidence="1" type="primary">kup</name>
    <name type="ordered locus">SFV_3753</name>
</gene>